<keyword id="KW-0012">Acyltransferase</keyword>
<keyword id="KW-0963">Cytoplasm</keyword>
<keyword id="KW-0808">Transferase</keyword>
<protein>
    <recommendedName>
        <fullName evidence="1">Leucyl/phenylalanyl-tRNA--protein transferase</fullName>
        <ecNumber evidence="1">2.3.2.6</ecNumber>
    </recommendedName>
    <alternativeName>
        <fullName evidence="1">L/F-transferase</fullName>
    </alternativeName>
    <alternativeName>
        <fullName evidence="1">Leucyltransferase</fullName>
    </alternativeName>
    <alternativeName>
        <fullName evidence="1">Phenyalanyltransferase</fullName>
    </alternativeName>
</protein>
<evidence type="ECO:0000255" key="1">
    <source>
        <dbReference type="HAMAP-Rule" id="MF_00688"/>
    </source>
</evidence>
<sequence length="215" mass="25143">MESSNLYSKLLNAPKNAPVFLSQNLEADFIVKAYTFGLFPWTSKPVTWWCPDPRCILIPNQIHIQKNMKKFINLYQIKLDYDFLKLITLCRDTRSQSWIDDEFITTYYKLFTQGYAHSLELYENNELIGGIYGLILGKVFFGESMVSIKKNASKVAMIKLCDLLKPYDFIIDCQVYNQHLEFMGAHNISRKEFLNILKEKCNQESGFKNFKDLIT</sequence>
<accession>A1W096</accession>
<dbReference type="EC" id="2.3.2.6" evidence="1"/>
<dbReference type="EMBL" id="CP000538">
    <property type="protein sequence ID" value="EAQ72236.1"/>
    <property type="molecule type" value="Genomic_DNA"/>
</dbReference>
<dbReference type="RefSeq" id="WP_002826100.1">
    <property type="nucleotide sequence ID" value="NC_008787.1"/>
</dbReference>
<dbReference type="SMR" id="A1W096"/>
<dbReference type="KEGG" id="cjj:CJJ81176_1127"/>
<dbReference type="eggNOG" id="COG2360">
    <property type="taxonomic scope" value="Bacteria"/>
</dbReference>
<dbReference type="HOGENOM" id="CLU_075045_0_1_7"/>
<dbReference type="Proteomes" id="UP000000646">
    <property type="component" value="Chromosome"/>
</dbReference>
<dbReference type="GO" id="GO:0005737">
    <property type="term" value="C:cytoplasm"/>
    <property type="evidence" value="ECO:0007669"/>
    <property type="project" value="UniProtKB-SubCell"/>
</dbReference>
<dbReference type="GO" id="GO:0008914">
    <property type="term" value="F:leucyl-tRNA--protein transferase activity"/>
    <property type="evidence" value="ECO:0007669"/>
    <property type="project" value="UniProtKB-UniRule"/>
</dbReference>
<dbReference type="GO" id="GO:0030163">
    <property type="term" value="P:protein catabolic process"/>
    <property type="evidence" value="ECO:0007669"/>
    <property type="project" value="UniProtKB-UniRule"/>
</dbReference>
<dbReference type="Gene3D" id="3.40.630.70">
    <property type="entry name" value="Leucyl/phenylalanyl-tRNA-protein transferase, C-terminal domain"/>
    <property type="match status" value="1"/>
</dbReference>
<dbReference type="Gene3D" id="3.30.70.3550">
    <property type="entry name" value="Leucyl/phenylalanyl-tRNA-protein transferase, N-terminal domain"/>
    <property type="match status" value="1"/>
</dbReference>
<dbReference type="HAMAP" id="MF_00688">
    <property type="entry name" value="Leu_Phe_trans"/>
    <property type="match status" value="1"/>
</dbReference>
<dbReference type="InterPro" id="IPR016181">
    <property type="entry name" value="Acyl_CoA_acyltransferase"/>
</dbReference>
<dbReference type="InterPro" id="IPR004616">
    <property type="entry name" value="Leu/Phe-tRNA_Trfase"/>
</dbReference>
<dbReference type="InterPro" id="IPR042203">
    <property type="entry name" value="Leu/Phe-tRNA_Trfase_C"/>
</dbReference>
<dbReference type="InterPro" id="IPR042221">
    <property type="entry name" value="Leu/Phe-tRNA_Trfase_N"/>
</dbReference>
<dbReference type="NCBIfam" id="TIGR00667">
    <property type="entry name" value="aat"/>
    <property type="match status" value="1"/>
</dbReference>
<dbReference type="PANTHER" id="PTHR30098">
    <property type="entry name" value="LEUCYL/PHENYLALANYL-TRNA--PROTEIN TRANSFERASE"/>
    <property type="match status" value="1"/>
</dbReference>
<dbReference type="PANTHER" id="PTHR30098:SF2">
    <property type="entry name" value="LEUCYL_PHENYLALANYL-TRNA--PROTEIN TRANSFERASE"/>
    <property type="match status" value="1"/>
</dbReference>
<dbReference type="Pfam" id="PF03588">
    <property type="entry name" value="Leu_Phe_trans"/>
    <property type="match status" value="1"/>
</dbReference>
<dbReference type="SUPFAM" id="SSF55729">
    <property type="entry name" value="Acyl-CoA N-acyltransferases (Nat)"/>
    <property type="match status" value="1"/>
</dbReference>
<organism>
    <name type="scientific">Campylobacter jejuni subsp. jejuni serotype O:23/36 (strain 81-176)</name>
    <dbReference type="NCBI Taxonomy" id="354242"/>
    <lineage>
        <taxon>Bacteria</taxon>
        <taxon>Pseudomonadati</taxon>
        <taxon>Campylobacterota</taxon>
        <taxon>Epsilonproteobacteria</taxon>
        <taxon>Campylobacterales</taxon>
        <taxon>Campylobacteraceae</taxon>
        <taxon>Campylobacter</taxon>
    </lineage>
</organism>
<name>LFTR_CAMJJ</name>
<feature type="chain" id="PRO_0000304331" description="Leucyl/phenylalanyl-tRNA--protein transferase">
    <location>
        <begin position="1"/>
        <end position="215"/>
    </location>
</feature>
<gene>
    <name evidence="1" type="primary">aat</name>
    <name type="ordered locus">CJJ81176_1127</name>
</gene>
<comment type="function">
    <text evidence="1">Functions in the N-end rule pathway of protein degradation where it conjugates Leu, Phe and, less efficiently, Met from aminoacyl-tRNAs to the N-termini of proteins containing an N-terminal arginine or lysine.</text>
</comment>
<comment type="catalytic activity">
    <reaction evidence="1">
        <text>N-terminal L-lysyl-[protein] + L-leucyl-tRNA(Leu) = N-terminal L-leucyl-L-lysyl-[protein] + tRNA(Leu) + H(+)</text>
        <dbReference type="Rhea" id="RHEA:12340"/>
        <dbReference type="Rhea" id="RHEA-COMP:9613"/>
        <dbReference type="Rhea" id="RHEA-COMP:9622"/>
        <dbReference type="Rhea" id="RHEA-COMP:12670"/>
        <dbReference type="Rhea" id="RHEA-COMP:12671"/>
        <dbReference type="ChEBI" id="CHEBI:15378"/>
        <dbReference type="ChEBI" id="CHEBI:65249"/>
        <dbReference type="ChEBI" id="CHEBI:78442"/>
        <dbReference type="ChEBI" id="CHEBI:78494"/>
        <dbReference type="ChEBI" id="CHEBI:133043"/>
        <dbReference type="EC" id="2.3.2.6"/>
    </reaction>
</comment>
<comment type="catalytic activity">
    <reaction evidence="1">
        <text>N-terminal L-arginyl-[protein] + L-leucyl-tRNA(Leu) = N-terminal L-leucyl-L-arginyl-[protein] + tRNA(Leu) + H(+)</text>
        <dbReference type="Rhea" id="RHEA:50416"/>
        <dbReference type="Rhea" id="RHEA-COMP:9613"/>
        <dbReference type="Rhea" id="RHEA-COMP:9622"/>
        <dbReference type="Rhea" id="RHEA-COMP:12672"/>
        <dbReference type="Rhea" id="RHEA-COMP:12673"/>
        <dbReference type="ChEBI" id="CHEBI:15378"/>
        <dbReference type="ChEBI" id="CHEBI:64719"/>
        <dbReference type="ChEBI" id="CHEBI:78442"/>
        <dbReference type="ChEBI" id="CHEBI:78494"/>
        <dbReference type="ChEBI" id="CHEBI:133044"/>
        <dbReference type="EC" id="2.3.2.6"/>
    </reaction>
</comment>
<comment type="catalytic activity">
    <reaction evidence="1">
        <text>L-phenylalanyl-tRNA(Phe) + an N-terminal L-alpha-aminoacyl-[protein] = an N-terminal L-phenylalanyl-L-alpha-aminoacyl-[protein] + tRNA(Phe)</text>
        <dbReference type="Rhea" id="RHEA:43632"/>
        <dbReference type="Rhea" id="RHEA-COMP:9668"/>
        <dbReference type="Rhea" id="RHEA-COMP:9699"/>
        <dbReference type="Rhea" id="RHEA-COMP:10636"/>
        <dbReference type="Rhea" id="RHEA-COMP:10637"/>
        <dbReference type="ChEBI" id="CHEBI:78442"/>
        <dbReference type="ChEBI" id="CHEBI:78531"/>
        <dbReference type="ChEBI" id="CHEBI:78597"/>
        <dbReference type="ChEBI" id="CHEBI:83561"/>
        <dbReference type="EC" id="2.3.2.6"/>
    </reaction>
</comment>
<comment type="subcellular location">
    <subcellularLocation>
        <location evidence="1">Cytoplasm</location>
    </subcellularLocation>
</comment>
<comment type="similarity">
    <text evidence="1">Belongs to the L/F-transferase family.</text>
</comment>
<reference key="1">
    <citation type="submission" date="2006-12" db="EMBL/GenBank/DDBJ databases">
        <authorList>
            <person name="Fouts D.E."/>
            <person name="Nelson K.E."/>
            <person name="Sebastian Y."/>
        </authorList>
    </citation>
    <scope>NUCLEOTIDE SEQUENCE [LARGE SCALE GENOMIC DNA]</scope>
    <source>
        <strain>81-176</strain>
    </source>
</reference>
<proteinExistence type="inferred from homology"/>